<organism>
    <name type="scientific">Methylorubrum extorquens (strain ATCC 14718 / DSM 1338 / JCM 2805 / NCIMB 9133 / AM1)</name>
    <name type="common">Methylobacterium extorquens</name>
    <dbReference type="NCBI Taxonomy" id="272630"/>
    <lineage>
        <taxon>Bacteria</taxon>
        <taxon>Pseudomonadati</taxon>
        <taxon>Pseudomonadota</taxon>
        <taxon>Alphaproteobacteria</taxon>
        <taxon>Hyphomicrobiales</taxon>
        <taxon>Methylobacteriaceae</taxon>
        <taxon>Methylorubrum</taxon>
    </lineage>
</organism>
<protein>
    <recommendedName>
        <fullName>Methenyltetrahydrofolate cyclohydrolase</fullName>
        <ecNumber>3.5.4.9</ecNumber>
    </recommendedName>
</protein>
<sequence length="208" mass="21723">MAGNETIETFLDGLASSAPTPGGGGAAAISGAMGAALVSMVCNLTIGKKKYVEVEADLKQVLEKSEGLRRTLTGMIADDVEAFDAVMGAYGLPKNTDEEKAARAAKIQEALKTATDVPLACCRVCREVIDLAEIVAEKGNLNVISDAGVAVLSAYAGLRSAALNVYVNAKGLDDRAFAEERLKELEGLLAEAGALNERIYETVKSKVN</sequence>
<name>FCHA_METEA</name>
<reference key="1">
    <citation type="journal article" date="1994" name="J. Bacteriol.">
        <title>Genetics of the serine cycle in Methylobacterium extorquens AM1: identification, sequence, and mutation of three new genes involved in C1 assimilation, orf4, mtkA, and mtkB.</title>
        <authorList>
            <person name="Chistoserdova L.V."/>
            <person name="Lidstrom M.E."/>
        </authorList>
    </citation>
    <scope>NUCLEOTIDE SEQUENCE [GENOMIC DNA]</scope>
    <scope>DISRUPTION PHENOTYPE</scope>
</reference>
<reference key="2">
    <citation type="journal article" date="2009" name="PLoS ONE">
        <title>Methylobacterium genome sequences: a reference blueprint to investigate microbial metabolism of C1 compounds from natural and industrial sources.</title>
        <authorList>
            <person name="Vuilleumier S."/>
            <person name="Chistoserdova L."/>
            <person name="Lee M.-C."/>
            <person name="Bringel F."/>
            <person name="Lajus A."/>
            <person name="Zhou Y."/>
            <person name="Gourion B."/>
            <person name="Barbe V."/>
            <person name="Chang J."/>
            <person name="Cruveiller S."/>
            <person name="Dossat C."/>
            <person name="Gillett W."/>
            <person name="Gruffaz C."/>
            <person name="Haugen E."/>
            <person name="Hourcade E."/>
            <person name="Levy R."/>
            <person name="Mangenot S."/>
            <person name="Muller E."/>
            <person name="Nadalig T."/>
            <person name="Pagni M."/>
            <person name="Penny C."/>
            <person name="Peyraud R."/>
            <person name="Robinson D.G."/>
            <person name="Roche D."/>
            <person name="Rouy Z."/>
            <person name="Saenampechek C."/>
            <person name="Salvignol G."/>
            <person name="Vallenet D."/>
            <person name="Wu Z."/>
            <person name="Marx C.J."/>
            <person name="Vorholt J.A."/>
            <person name="Olson M.V."/>
            <person name="Kaul R."/>
            <person name="Weissenbach J."/>
            <person name="Medigue C."/>
            <person name="Lidstrom M.E."/>
        </authorList>
    </citation>
    <scope>NUCLEOTIDE SEQUENCE [LARGE SCALE GENOMIC DNA]</scope>
    <source>
        <strain>ATCC 14718 / DSM 1338 / JCM 2805 / NCIMB 9133 / AM1</strain>
    </source>
</reference>
<reference key="3">
    <citation type="journal article" date="1999" name="Eur. J. Biochem.">
        <title>A methenyl tetrahydromethanopterin cyclohydrolase and a methenyl tetrahydrofolate cyclohydrolase in Methylobacterium extorquens AM1.</title>
        <authorList>
            <person name="Pomper B.K."/>
            <person name="Vorholt J.A."/>
            <person name="Chistoserdova L.V."/>
            <person name="Lidstrom M.E."/>
            <person name="Thauer R.K."/>
        </authorList>
    </citation>
    <scope>CHARACTERIZATION</scope>
    <scope>PROTEIN SEQUENCE OF 1-21</scope>
</reference>
<gene>
    <name type="primary">fchA</name>
    <name type="ordered locus">MexAM1_META1p1729</name>
</gene>
<accession>Q49135</accession>
<accession>C5B109</accession>
<dbReference type="EC" id="3.5.4.9"/>
<dbReference type="EMBL" id="L33465">
    <property type="protein sequence ID" value="AAA62653.1"/>
    <property type="molecule type" value="Genomic_DNA"/>
</dbReference>
<dbReference type="EMBL" id="CP001510">
    <property type="protein sequence ID" value="ACS39573.1"/>
    <property type="molecule type" value="Genomic_DNA"/>
</dbReference>
<dbReference type="PIR" id="A55230">
    <property type="entry name" value="A55230"/>
</dbReference>
<dbReference type="RefSeq" id="WP_003597635.1">
    <property type="nucleotide sequence ID" value="NC_012808.1"/>
</dbReference>
<dbReference type="PDB" id="7VG4">
    <property type="method" value="X-ray"/>
    <property type="resolution" value="2.77 A"/>
    <property type="chains" value="A/B/C/D/E/F=1-208"/>
</dbReference>
<dbReference type="PDB" id="7VG5">
    <property type="method" value="X-ray"/>
    <property type="resolution" value="2.25 A"/>
    <property type="chains" value="A/B=1-208"/>
</dbReference>
<dbReference type="PDBsum" id="7VG4"/>
<dbReference type="PDBsum" id="7VG5"/>
<dbReference type="SMR" id="Q49135"/>
<dbReference type="STRING" id="272630.MexAM1_META1p1729"/>
<dbReference type="GeneID" id="72989455"/>
<dbReference type="KEGG" id="mea:Mex_1p1729"/>
<dbReference type="eggNOG" id="COG3404">
    <property type="taxonomic scope" value="Bacteria"/>
</dbReference>
<dbReference type="HOGENOM" id="CLU_088419_0_1_5"/>
<dbReference type="OrthoDB" id="7959174at2"/>
<dbReference type="BioCyc" id="MetaCyc:MONOMER-3943"/>
<dbReference type="UniPathway" id="UPA00927"/>
<dbReference type="Proteomes" id="UP000009081">
    <property type="component" value="Chromosome"/>
</dbReference>
<dbReference type="GO" id="GO:0016020">
    <property type="term" value="C:membrane"/>
    <property type="evidence" value="ECO:0007669"/>
    <property type="project" value="UniProtKB-SubCell"/>
</dbReference>
<dbReference type="GO" id="GO:0004477">
    <property type="term" value="F:methenyltetrahydrofolate cyclohydrolase activity"/>
    <property type="evidence" value="ECO:0007669"/>
    <property type="project" value="UniProtKB-EC"/>
</dbReference>
<dbReference type="GO" id="GO:0006730">
    <property type="term" value="P:one-carbon metabolic process"/>
    <property type="evidence" value="ECO:0007669"/>
    <property type="project" value="UniProtKB-KW"/>
</dbReference>
<dbReference type="Gene3D" id="1.20.120.680">
    <property type="entry name" value="Formiminotetrahydrofolate cyclodeaminase monomer, up-and-down helical bundle"/>
    <property type="match status" value="1"/>
</dbReference>
<dbReference type="InterPro" id="IPR007044">
    <property type="entry name" value="Cyclodeamin/CycHdrlase"/>
</dbReference>
<dbReference type="InterPro" id="IPR036178">
    <property type="entry name" value="Formintransfe-cycloase-like_sf"/>
</dbReference>
<dbReference type="InterPro" id="IPR054893">
    <property type="entry name" value="MthfCyhylase"/>
</dbReference>
<dbReference type="NCBIfam" id="NF045657">
    <property type="entry name" value="MthfCyhylaseFchA"/>
    <property type="match status" value="1"/>
</dbReference>
<dbReference type="Pfam" id="PF04961">
    <property type="entry name" value="FTCD_C"/>
    <property type="match status" value="1"/>
</dbReference>
<dbReference type="SUPFAM" id="SSF101262">
    <property type="entry name" value="Methenyltetrahydrofolate cyclohydrolase-like"/>
    <property type="match status" value="1"/>
</dbReference>
<feature type="chain" id="PRO_0000087208" description="Methenyltetrahydrofolate cyclohydrolase">
    <location>
        <begin position="1"/>
        <end position="208"/>
    </location>
</feature>
<feature type="transmembrane region" description="Helical" evidence="1">
    <location>
        <begin position="25"/>
        <end position="46"/>
    </location>
</feature>
<feature type="sequence conflict" description="In Ref. 1; AAA62653." evidence="3" ref="1">
    <original>K</original>
    <variation>M</variation>
    <location>
        <position position="59"/>
    </location>
</feature>
<feature type="helix" evidence="5">
    <location>
        <begin position="7"/>
        <end position="15"/>
    </location>
</feature>
<feature type="strand" evidence="5">
    <location>
        <begin position="19"/>
        <end position="21"/>
    </location>
</feature>
<feature type="helix" evidence="5">
    <location>
        <begin position="23"/>
        <end position="43"/>
    </location>
</feature>
<feature type="turn" evidence="4">
    <location>
        <begin position="44"/>
        <end position="47"/>
    </location>
</feature>
<feature type="helix" evidence="5">
    <location>
        <begin position="49"/>
        <end position="54"/>
    </location>
</feature>
<feature type="helix" evidence="5">
    <location>
        <begin position="55"/>
        <end position="90"/>
    </location>
</feature>
<feature type="helix" evidence="5">
    <location>
        <begin position="97"/>
        <end position="138"/>
    </location>
</feature>
<feature type="helix" evidence="5">
    <location>
        <begin position="141"/>
        <end position="144"/>
    </location>
</feature>
<feature type="helix" evidence="5">
    <location>
        <begin position="145"/>
        <end position="169"/>
    </location>
</feature>
<feature type="helix" evidence="5">
    <location>
        <begin position="175"/>
        <end position="207"/>
    </location>
</feature>
<evidence type="ECO:0000255" key="1"/>
<evidence type="ECO:0000269" key="2">
    <source>
    </source>
</evidence>
<evidence type="ECO:0000305" key="3"/>
<evidence type="ECO:0007829" key="4">
    <source>
        <dbReference type="PDB" id="7VG4"/>
    </source>
</evidence>
<evidence type="ECO:0007829" key="5">
    <source>
        <dbReference type="PDB" id="7VG5"/>
    </source>
</evidence>
<keyword id="KW-0002">3D-structure</keyword>
<keyword id="KW-0903">Direct protein sequencing</keyword>
<keyword id="KW-0378">Hydrolase</keyword>
<keyword id="KW-0472">Membrane</keyword>
<keyword id="KW-0554">One-carbon metabolism</keyword>
<keyword id="KW-1185">Reference proteome</keyword>
<keyword id="KW-0812">Transmembrane</keyword>
<keyword id="KW-1133">Transmembrane helix</keyword>
<comment type="function">
    <text>Required for both C1 and C2 metabolism.</text>
</comment>
<comment type="catalytic activity">
    <reaction>
        <text>(6R)-5,10-methenyltetrahydrofolate + H2O = (6R)-10-formyltetrahydrofolate + H(+)</text>
        <dbReference type="Rhea" id="RHEA:23700"/>
        <dbReference type="ChEBI" id="CHEBI:15377"/>
        <dbReference type="ChEBI" id="CHEBI:15378"/>
        <dbReference type="ChEBI" id="CHEBI:57455"/>
        <dbReference type="ChEBI" id="CHEBI:195366"/>
        <dbReference type="EC" id="3.5.4.9"/>
    </reaction>
</comment>
<comment type="pathway">
    <text>One-carbon metabolism; formaldehyde assimilation via serine pathway.</text>
</comment>
<comment type="subunit">
    <text>Homodimer.</text>
</comment>
<comment type="subcellular location">
    <subcellularLocation>
        <location evidence="3">Membrane</location>
        <topology evidence="3">Single-pass membrane protein</topology>
    </subcellularLocation>
</comment>
<comment type="disruption phenotype">
    <text evidence="2">Mutants are unable to grow on either methanol or ethylamine in the presence of glycolate. Glyoxylate restores growth, but only on C2 compounds.</text>
</comment>
<comment type="similarity">
    <text evidence="3">Belongs to the cyclodeaminase/cyclohydrolase family.</text>
</comment>
<proteinExistence type="evidence at protein level"/>